<comment type="function">
    <text evidence="1">Catalyzes the transfer of the enolpyruvyl moiety of phosphoenolpyruvate (PEP) to the 5-hydroxyl of shikimate-3-phosphate (S3P) to produce enolpyruvyl shikimate-3-phosphate and inorganic phosphate.</text>
</comment>
<comment type="catalytic activity">
    <reaction evidence="1">
        <text>3-phosphoshikimate + phosphoenolpyruvate = 5-O-(1-carboxyvinyl)-3-phosphoshikimate + phosphate</text>
        <dbReference type="Rhea" id="RHEA:21256"/>
        <dbReference type="ChEBI" id="CHEBI:43474"/>
        <dbReference type="ChEBI" id="CHEBI:57701"/>
        <dbReference type="ChEBI" id="CHEBI:58702"/>
        <dbReference type="ChEBI" id="CHEBI:145989"/>
        <dbReference type="EC" id="2.5.1.19"/>
    </reaction>
    <physiologicalReaction direction="left-to-right" evidence="1">
        <dbReference type="Rhea" id="RHEA:21257"/>
    </physiologicalReaction>
</comment>
<comment type="pathway">
    <text evidence="1">Metabolic intermediate biosynthesis; chorismate biosynthesis; chorismate from D-erythrose 4-phosphate and phosphoenolpyruvate: step 6/7.</text>
</comment>
<comment type="subunit">
    <text evidence="1">Monomer.</text>
</comment>
<comment type="subcellular location">
    <subcellularLocation>
        <location evidence="1">Cytoplasm</location>
    </subcellularLocation>
</comment>
<comment type="similarity">
    <text evidence="1">Belongs to the EPSP synthase family.</text>
</comment>
<protein>
    <recommendedName>
        <fullName evidence="1">3-phosphoshikimate 1-carboxyvinyltransferase</fullName>
        <ecNumber evidence="1">2.5.1.19</ecNumber>
    </recommendedName>
    <alternativeName>
        <fullName evidence="1">5-enolpyruvylshikimate-3-phosphate synthase</fullName>
        <shortName evidence="1">EPSP synthase</shortName>
        <shortName evidence="1">EPSPS</shortName>
    </alternativeName>
</protein>
<accession>A7I0N1</accession>
<evidence type="ECO:0000255" key="1">
    <source>
        <dbReference type="HAMAP-Rule" id="MF_00210"/>
    </source>
</evidence>
<reference key="1">
    <citation type="submission" date="2007-07" db="EMBL/GenBank/DDBJ databases">
        <title>Complete genome sequence of Campylobacter hominis ATCC BAA-381, a commensal isolated from the human gastrointestinal tract.</title>
        <authorList>
            <person name="Fouts D.E."/>
            <person name="Mongodin E.F."/>
            <person name="Puiu D."/>
            <person name="Sebastian Y."/>
            <person name="Miller W.G."/>
            <person name="Mandrell R.E."/>
            <person name="Nelson K.E."/>
        </authorList>
    </citation>
    <scope>NUCLEOTIDE SEQUENCE [LARGE SCALE GENOMIC DNA]</scope>
    <source>
        <strain>ATCC BAA-381 / DSM 21671 / CCUG 45161 / LMG 19568 / NCTC 13146 / CH001A</strain>
    </source>
</reference>
<dbReference type="EC" id="2.5.1.19" evidence="1"/>
<dbReference type="EMBL" id="CP000776">
    <property type="protein sequence ID" value="ABS51320.1"/>
    <property type="molecule type" value="Genomic_DNA"/>
</dbReference>
<dbReference type="RefSeq" id="WP_012108357.1">
    <property type="nucleotide sequence ID" value="NC_009714.1"/>
</dbReference>
<dbReference type="SMR" id="A7I0N1"/>
<dbReference type="STRING" id="360107.CHAB381_0484"/>
<dbReference type="KEGG" id="cha:CHAB381_0484"/>
<dbReference type="eggNOG" id="COG0128">
    <property type="taxonomic scope" value="Bacteria"/>
</dbReference>
<dbReference type="HOGENOM" id="CLU_024321_0_1_7"/>
<dbReference type="OrthoDB" id="9809920at2"/>
<dbReference type="UniPathway" id="UPA00053">
    <property type="reaction ID" value="UER00089"/>
</dbReference>
<dbReference type="Proteomes" id="UP000002407">
    <property type="component" value="Chromosome"/>
</dbReference>
<dbReference type="GO" id="GO:0005737">
    <property type="term" value="C:cytoplasm"/>
    <property type="evidence" value="ECO:0007669"/>
    <property type="project" value="UniProtKB-SubCell"/>
</dbReference>
<dbReference type="GO" id="GO:0003866">
    <property type="term" value="F:3-phosphoshikimate 1-carboxyvinyltransferase activity"/>
    <property type="evidence" value="ECO:0007669"/>
    <property type="project" value="UniProtKB-UniRule"/>
</dbReference>
<dbReference type="GO" id="GO:0008652">
    <property type="term" value="P:amino acid biosynthetic process"/>
    <property type="evidence" value="ECO:0007669"/>
    <property type="project" value="UniProtKB-KW"/>
</dbReference>
<dbReference type="GO" id="GO:0009073">
    <property type="term" value="P:aromatic amino acid family biosynthetic process"/>
    <property type="evidence" value="ECO:0007669"/>
    <property type="project" value="UniProtKB-KW"/>
</dbReference>
<dbReference type="GO" id="GO:0009423">
    <property type="term" value="P:chorismate biosynthetic process"/>
    <property type="evidence" value="ECO:0007669"/>
    <property type="project" value="UniProtKB-UniRule"/>
</dbReference>
<dbReference type="CDD" id="cd01556">
    <property type="entry name" value="EPSP_synthase"/>
    <property type="match status" value="1"/>
</dbReference>
<dbReference type="FunFam" id="3.65.10.10:FF:000005">
    <property type="entry name" value="3-phosphoshikimate 1-carboxyvinyltransferase"/>
    <property type="match status" value="1"/>
</dbReference>
<dbReference type="Gene3D" id="3.65.10.10">
    <property type="entry name" value="Enolpyruvate transferase domain"/>
    <property type="match status" value="2"/>
</dbReference>
<dbReference type="HAMAP" id="MF_00210">
    <property type="entry name" value="EPSP_synth"/>
    <property type="match status" value="1"/>
</dbReference>
<dbReference type="InterPro" id="IPR001986">
    <property type="entry name" value="Enolpyruvate_Tfrase_dom"/>
</dbReference>
<dbReference type="InterPro" id="IPR036968">
    <property type="entry name" value="Enolpyruvate_Tfrase_sf"/>
</dbReference>
<dbReference type="InterPro" id="IPR006264">
    <property type="entry name" value="EPSP_synthase"/>
</dbReference>
<dbReference type="InterPro" id="IPR023193">
    <property type="entry name" value="EPSP_synthase_CS"/>
</dbReference>
<dbReference type="InterPro" id="IPR013792">
    <property type="entry name" value="RNA3'P_cycl/enolpyr_Trfase_a/b"/>
</dbReference>
<dbReference type="NCBIfam" id="TIGR01356">
    <property type="entry name" value="aroA"/>
    <property type="match status" value="1"/>
</dbReference>
<dbReference type="PANTHER" id="PTHR21090">
    <property type="entry name" value="AROM/DEHYDROQUINATE SYNTHASE"/>
    <property type="match status" value="1"/>
</dbReference>
<dbReference type="PANTHER" id="PTHR21090:SF5">
    <property type="entry name" value="PENTAFUNCTIONAL AROM POLYPEPTIDE"/>
    <property type="match status" value="1"/>
</dbReference>
<dbReference type="Pfam" id="PF00275">
    <property type="entry name" value="EPSP_synthase"/>
    <property type="match status" value="1"/>
</dbReference>
<dbReference type="PIRSF" id="PIRSF000505">
    <property type="entry name" value="EPSPS"/>
    <property type="match status" value="1"/>
</dbReference>
<dbReference type="SUPFAM" id="SSF55205">
    <property type="entry name" value="EPT/RTPC-like"/>
    <property type="match status" value="1"/>
</dbReference>
<dbReference type="PROSITE" id="PS00104">
    <property type="entry name" value="EPSP_SYNTHASE_1"/>
    <property type="match status" value="1"/>
</dbReference>
<dbReference type="PROSITE" id="PS00885">
    <property type="entry name" value="EPSP_SYNTHASE_2"/>
    <property type="match status" value="1"/>
</dbReference>
<name>AROA_CAMHC</name>
<organism>
    <name type="scientific">Campylobacter hominis (strain ATCC BAA-381 / DSM 21671 / CCUG 45161 / LMG 19568 / NCTC 13146 / CH001A)</name>
    <dbReference type="NCBI Taxonomy" id="360107"/>
    <lineage>
        <taxon>Bacteria</taxon>
        <taxon>Pseudomonadati</taxon>
        <taxon>Campylobacterota</taxon>
        <taxon>Epsilonproteobacteria</taxon>
        <taxon>Campylobacterales</taxon>
        <taxon>Campylobacteraceae</taxon>
        <taxon>Campylobacter</taxon>
    </lineage>
</organism>
<gene>
    <name evidence="1" type="primary">aroA</name>
    <name type="ordered locus">CHAB381_0484</name>
</gene>
<sequence length="424" mass="46309">MKIFAQSKPLKATISNIAADKSISHRAVIFSLLSSGTNKIENFLFAEDTEHSLEIARKLGADIEIKEGIVFIDAPKKIVEPDCILECGNSGTSMRLFMGLLASVEGFFVLSGDEYLNERPMKRVGEPLCKVGAKIYGRLDGDKAPLCIQGGKLDFFKFKSKIASAQVKTALILAALNSQGCEYSEPELSRDHSEKMLKKMGADIEISGLNLKVKPLTKPLDPLEIFIPNDPSSAFYYAVAATIIPGSKIILKNMLLNKTRIEAYEVLRKMGANIKFTPKSEIYEQIGDIEISYAPLKAVEVSENISWLIDEAPALAIAFACAKGTSVLRNAKELRVKESDRIKVICEGLKCCGINVTELEDGFKITGGEAEPAIITPYGDHRIAMSFAILGLKCGMIIENSECIATSFPNFGKILKQIGANIED</sequence>
<proteinExistence type="inferred from homology"/>
<keyword id="KW-0028">Amino-acid biosynthesis</keyword>
<keyword id="KW-0057">Aromatic amino acid biosynthesis</keyword>
<keyword id="KW-0963">Cytoplasm</keyword>
<keyword id="KW-1185">Reference proteome</keyword>
<keyword id="KW-0808">Transferase</keyword>
<feature type="chain" id="PRO_1000012422" description="3-phosphoshikimate 1-carboxyvinyltransferase">
    <location>
        <begin position="1"/>
        <end position="424"/>
    </location>
</feature>
<feature type="active site" description="Proton acceptor" evidence="1">
    <location>
        <position position="310"/>
    </location>
</feature>
<feature type="binding site" evidence="1">
    <location>
        <position position="21"/>
    </location>
    <ligand>
        <name>3-phosphoshikimate</name>
        <dbReference type="ChEBI" id="CHEBI:145989"/>
    </ligand>
</feature>
<feature type="binding site" evidence="1">
    <location>
        <position position="21"/>
    </location>
    <ligand>
        <name>phosphoenolpyruvate</name>
        <dbReference type="ChEBI" id="CHEBI:58702"/>
    </ligand>
</feature>
<feature type="binding site" evidence="1">
    <location>
        <position position="22"/>
    </location>
    <ligand>
        <name>3-phosphoshikimate</name>
        <dbReference type="ChEBI" id="CHEBI:145989"/>
    </ligand>
</feature>
<feature type="binding site" evidence="1">
    <location>
        <position position="26"/>
    </location>
    <ligand>
        <name>3-phosphoshikimate</name>
        <dbReference type="ChEBI" id="CHEBI:145989"/>
    </ligand>
</feature>
<feature type="binding site" evidence="1">
    <location>
        <position position="91"/>
    </location>
    <ligand>
        <name>phosphoenolpyruvate</name>
        <dbReference type="ChEBI" id="CHEBI:58702"/>
    </ligand>
</feature>
<feature type="binding site" evidence="1">
    <location>
        <position position="119"/>
    </location>
    <ligand>
        <name>phosphoenolpyruvate</name>
        <dbReference type="ChEBI" id="CHEBI:58702"/>
    </ligand>
</feature>
<feature type="binding site" evidence="1">
    <location>
        <position position="164"/>
    </location>
    <ligand>
        <name>3-phosphoshikimate</name>
        <dbReference type="ChEBI" id="CHEBI:145989"/>
    </ligand>
</feature>
<feature type="binding site" evidence="1">
    <location>
        <position position="166"/>
    </location>
    <ligand>
        <name>3-phosphoshikimate</name>
        <dbReference type="ChEBI" id="CHEBI:145989"/>
    </ligand>
</feature>
<feature type="binding site" evidence="1">
    <location>
        <position position="166"/>
    </location>
    <ligand>
        <name>phosphoenolpyruvate</name>
        <dbReference type="ChEBI" id="CHEBI:58702"/>
    </ligand>
</feature>
<feature type="binding site" evidence="1">
    <location>
        <position position="310"/>
    </location>
    <ligand>
        <name>3-phosphoshikimate</name>
        <dbReference type="ChEBI" id="CHEBI:145989"/>
    </ligand>
</feature>
<feature type="binding site" evidence="1">
    <location>
        <position position="337"/>
    </location>
    <ligand>
        <name>3-phosphoshikimate</name>
        <dbReference type="ChEBI" id="CHEBI:145989"/>
    </ligand>
</feature>
<feature type="binding site" evidence="1">
    <location>
        <position position="341"/>
    </location>
    <ligand>
        <name>phosphoenolpyruvate</name>
        <dbReference type="ChEBI" id="CHEBI:58702"/>
    </ligand>
</feature>
<feature type="binding site" evidence="1">
    <location>
        <position position="382"/>
    </location>
    <ligand>
        <name>phosphoenolpyruvate</name>
        <dbReference type="ChEBI" id="CHEBI:58702"/>
    </ligand>
</feature>